<feature type="chain" id="PRO_0000389610" description="Putative sulfurtransferase YtwF">
    <location>
        <begin position="1"/>
        <end position="103"/>
    </location>
</feature>
<feature type="domain" description="Rhodanese" evidence="1">
    <location>
        <begin position="17"/>
        <end position="100"/>
    </location>
</feature>
<feature type="active site" description="Cysteine persulfide intermediate" evidence="1">
    <location>
        <position position="65"/>
    </location>
</feature>
<protein>
    <recommendedName>
        <fullName evidence="2">Putative sulfurtransferase YtwF</fullName>
        <ecNumber evidence="2">2.8.1.-</ecNumber>
    </recommendedName>
</protein>
<proteinExistence type="predicted"/>
<name>YTWF_BACSU</name>
<reference key="1">
    <citation type="journal article" date="1997" name="Nature">
        <title>The complete genome sequence of the Gram-positive bacterium Bacillus subtilis.</title>
        <authorList>
            <person name="Kunst F."/>
            <person name="Ogasawara N."/>
            <person name="Moszer I."/>
            <person name="Albertini A.M."/>
            <person name="Alloni G."/>
            <person name="Azevedo V."/>
            <person name="Bertero M.G."/>
            <person name="Bessieres P."/>
            <person name="Bolotin A."/>
            <person name="Borchert S."/>
            <person name="Borriss R."/>
            <person name="Boursier L."/>
            <person name="Brans A."/>
            <person name="Braun M."/>
            <person name="Brignell S.C."/>
            <person name="Bron S."/>
            <person name="Brouillet S."/>
            <person name="Bruschi C.V."/>
            <person name="Caldwell B."/>
            <person name="Capuano V."/>
            <person name="Carter N.M."/>
            <person name="Choi S.-K."/>
            <person name="Codani J.-J."/>
            <person name="Connerton I.F."/>
            <person name="Cummings N.J."/>
            <person name="Daniel R.A."/>
            <person name="Denizot F."/>
            <person name="Devine K.M."/>
            <person name="Duesterhoeft A."/>
            <person name="Ehrlich S.D."/>
            <person name="Emmerson P.T."/>
            <person name="Entian K.-D."/>
            <person name="Errington J."/>
            <person name="Fabret C."/>
            <person name="Ferrari E."/>
            <person name="Foulger D."/>
            <person name="Fritz C."/>
            <person name="Fujita M."/>
            <person name="Fujita Y."/>
            <person name="Fuma S."/>
            <person name="Galizzi A."/>
            <person name="Galleron N."/>
            <person name="Ghim S.-Y."/>
            <person name="Glaser P."/>
            <person name="Goffeau A."/>
            <person name="Golightly E.J."/>
            <person name="Grandi G."/>
            <person name="Guiseppi G."/>
            <person name="Guy B.J."/>
            <person name="Haga K."/>
            <person name="Haiech J."/>
            <person name="Harwood C.R."/>
            <person name="Henaut A."/>
            <person name="Hilbert H."/>
            <person name="Holsappel S."/>
            <person name="Hosono S."/>
            <person name="Hullo M.-F."/>
            <person name="Itaya M."/>
            <person name="Jones L.-M."/>
            <person name="Joris B."/>
            <person name="Karamata D."/>
            <person name="Kasahara Y."/>
            <person name="Klaerr-Blanchard M."/>
            <person name="Klein C."/>
            <person name="Kobayashi Y."/>
            <person name="Koetter P."/>
            <person name="Koningstein G."/>
            <person name="Krogh S."/>
            <person name="Kumano M."/>
            <person name="Kurita K."/>
            <person name="Lapidus A."/>
            <person name="Lardinois S."/>
            <person name="Lauber J."/>
            <person name="Lazarevic V."/>
            <person name="Lee S.-M."/>
            <person name="Levine A."/>
            <person name="Liu H."/>
            <person name="Masuda S."/>
            <person name="Mauel C."/>
            <person name="Medigue C."/>
            <person name="Medina N."/>
            <person name="Mellado R.P."/>
            <person name="Mizuno M."/>
            <person name="Moestl D."/>
            <person name="Nakai S."/>
            <person name="Noback M."/>
            <person name="Noone D."/>
            <person name="O'Reilly M."/>
            <person name="Ogawa K."/>
            <person name="Ogiwara A."/>
            <person name="Oudega B."/>
            <person name="Park S.-H."/>
            <person name="Parro V."/>
            <person name="Pohl T.M."/>
            <person name="Portetelle D."/>
            <person name="Porwollik S."/>
            <person name="Prescott A.M."/>
            <person name="Presecan E."/>
            <person name="Pujic P."/>
            <person name="Purnelle B."/>
            <person name="Rapoport G."/>
            <person name="Rey M."/>
            <person name="Reynolds S."/>
            <person name="Rieger M."/>
            <person name="Rivolta C."/>
            <person name="Rocha E."/>
            <person name="Roche B."/>
            <person name="Rose M."/>
            <person name="Sadaie Y."/>
            <person name="Sato T."/>
            <person name="Scanlan E."/>
            <person name="Schleich S."/>
            <person name="Schroeter R."/>
            <person name="Scoffone F."/>
            <person name="Sekiguchi J."/>
            <person name="Sekowska A."/>
            <person name="Seror S.J."/>
            <person name="Serror P."/>
            <person name="Shin B.-S."/>
            <person name="Soldo B."/>
            <person name="Sorokin A."/>
            <person name="Tacconi E."/>
            <person name="Takagi T."/>
            <person name="Takahashi H."/>
            <person name="Takemaru K."/>
            <person name="Takeuchi M."/>
            <person name="Tamakoshi A."/>
            <person name="Tanaka T."/>
            <person name="Terpstra P."/>
            <person name="Tognoni A."/>
            <person name="Tosato V."/>
            <person name="Uchiyama S."/>
            <person name="Vandenbol M."/>
            <person name="Vannier F."/>
            <person name="Vassarotti A."/>
            <person name="Viari A."/>
            <person name="Wambutt R."/>
            <person name="Wedler E."/>
            <person name="Wedler H."/>
            <person name="Weitzenegger T."/>
            <person name="Winters P."/>
            <person name="Wipat A."/>
            <person name="Yamamoto H."/>
            <person name="Yamane K."/>
            <person name="Yasumoto K."/>
            <person name="Yata K."/>
            <person name="Yoshida K."/>
            <person name="Yoshikawa H.-F."/>
            <person name="Zumstein E."/>
            <person name="Yoshikawa H."/>
            <person name="Danchin A."/>
        </authorList>
    </citation>
    <scope>NUCLEOTIDE SEQUENCE [LARGE SCALE GENOMIC DNA]</scope>
    <source>
        <strain>168</strain>
    </source>
</reference>
<keyword id="KW-1185">Reference proteome</keyword>
<keyword id="KW-0808">Transferase</keyword>
<accession>O32072</accession>
<sequence length="103" mass="11835">MEIKEISTAALKEKIEADEELYLIDVREDEEVAEGMIPQAVHIRMGDIPEKMETLDKDKEYVFICRSGMRSMNVCKYLDEQGFKTVNVEGGMMAWEGETKPKN</sequence>
<dbReference type="EC" id="2.8.1.-" evidence="2"/>
<dbReference type="EMBL" id="AL009126">
    <property type="protein sequence ID" value="CAB15009.2"/>
    <property type="molecule type" value="Genomic_DNA"/>
</dbReference>
<dbReference type="RefSeq" id="NP_390909.2">
    <property type="nucleotide sequence ID" value="NC_000964.3"/>
</dbReference>
<dbReference type="RefSeq" id="WP_004398993.1">
    <property type="nucleotide sequence ID" value="NZ_OZ025638.1"/>
</dbReference>
<dbReference type="SMR" id="O32072"/>
<dbReference type="FunCoup" id="O32072">
    <property type="interactions" value="109"/>
</dbReference>
<dbReference type="STRING" id="224308.BSU30310"/>
<dbReference type="PaxDb" id="224308-BSU30310"/>
<dbReference type="EnsemblBacteria" id="CAB15009">
    <property type="protein sequence ID" value="CAB15009"/>
    <property type="gene ID" value="BSU_30310"/>
</dbReference>
<dbReference type="GeneID" id="936589"/>
<dbReference type="KEGG" id="bsu:BSU30310"/>
<dbReference type="PATRIC" id="fig|224308.179.peg.3287"/>
<dbReference type="eggNOG" id="COG0607">
    <property type="taxonomic scope" value="Bacteria"/>
</dbReference>
<dbReference type="InParanoid" id="O32072"/>
<dbReference type="OrthoDB" id="9800872at2"/>
<dbReference type="PhylomeDB" id="O32072"/>
<dbReference type="BioCyc" id="BSUB:BSU30310-MONOMER"/>
<dbReference type="Proteomes" id="UP000001570">
    <property type="component" value="Chromosome"/>
</dbReference>
<dbReference type="GO" id="GO:0016740">
    <property type="term" value="F:transferase activity"/>
    <property type="evidence" value="ECO:0007669"/>
    <property type="project" value="UniProtKB-KW"/>
</dbReference>
<dbReference type="CDD" id="cd00158">
    <property type="entry name" value="RHOD"/>
    <property type="match status" value="1"/>
</dbReference>
<dbReference type="Gene3D" id="3.40.250.10">
    <property type="entry name" value="Rhodanese-like domain"/>
    <property type="match status" value="1"/>
</dbReference>
<dbReference type="InterPro" id="IPR050229">
    <property type="entry name" value="GlpE_sulfurtransferase"/>
</dbReference>
<dbReference type="InterPro" id="IPR001763">
    <property type="entry name" value="Rhodanese-like_dom"/>
</dbReference>
<dbReference type="InterPro" id="IPR036873">
    <property type="entry name" value="Rhodanese-like_dom_sf"/>
</dbReference>
<dbReference type="PANTHER" id="PTHR43031">
    <property type="entry name" value="FAD-DEPENDENT OXIDOREDUCTASE"/>
    <property type="match status" value="1"/>
</dbReference>
<dbReference type="PANTHER" id="PTHR43031:SF17">
    <property type="entry name" value="SULFURTRANSFERASE YTWF-RELATED"/>
    <property type="match status" value="1"/>
</dbReference>
<dbReference type="Pfam" id="PF00581">
    <property type="entry name" value="Rhodanese"/>
    <property type="match status" value="1"/>
</dbReference>
<dbReference type="SMART" id="SM00450">
    <property type="entry name" value="RHOD"/>
    <property type="match status" value="1"/>
</dbReference>
<dbReference type="SUPFAM" id="SSF52821">
    <property type="entry name" value="Rhodanese/Cell cycle control phosphatase"/>
    <property type="match status" value="1"/>
</dbReference>
<dbReference type="PROSITE" id="PS50206">
    <property type="entry name" value="RHODANESE_3"/>
    <property type="match status" value="1"/>
</dbReference>
<gene>
    <name type="primary">ytwF</name>
    <name type="ordered locus">BSU30310</name>
</gene>
<organism>
    <name type="scientific">Bacillus subtilis (strain 168)</name>
    <dbReference type="NCBI Taxonomy" id="224308"/>
    <lineage>
        <taxon>Bacteria</taxon>
        <taxon>Bacillati</taxon>
        <taxon>Bacillota</taxon>
        <taxon>Bacilli</taxon>
        <taxon>Bacillales</taxon>
        <taxon>Bacillaceae</taxon>
        <taxon>Bacillus</taxon>
    </lineage>
</organism>
<evidence type="ECO:0000255" key="1">
    <source>
        <dbReference type="PROSITE-ProRule" id="PRU00173"/>
    </source>
</evidence>
<evidence type="ECO:0000305" key="2"/>